<reference key="1">
    <citation type="journal article" date="2008" name="J. Bacteriol.">
        <title>The pangenome structure of Escherichia coli: comparative genomic analysis of E. coli commensal and pathogenic isolates.</title>
        <authorList>
            <person name="Rasko D.A."/>
            <person name="Rosovitz M.J."/>
            <person name="Myers G.S.A."/>
            <person name="Mongodin E.F."/>
            <person name="Fricke W.F."/>
            <person name="Gajer P."/>
            <person name="Crabtree J."/>
            <person name="Sebaihia M."/>
            <person name="Thomson N.R."/>
            <person name="Chaudhuri R."/>
            <person name="Henderson I.R."/>
            <person name="Sperandio V."/>
            <person name="Ravel J."/>
        </authorList>
    </citation>
    <scope>NUCLEOTIDE SEQUENCE [LARGE SCALE GENOMIC DNA]</scope>
    <source>
        <strain>E24377A / ETEC</strain>
    </source>
</reference>
<proteinExistence type="inferred from homology"/>
<evidence type="ECO:0000255" key="1">
    <source>
        <dbReference type="HAMAP-Rule" id="MF_01055"/>
    </source>
</evidence>
<accession>A7ZHD4</accession>
<organism>
    <name type="scientific">Escherichia coli O139:H28 (strain E24377A / ETEC)</name>
    <dbReference type="NCBI Taxonomy" id="331111"/>
    <lineage>
        <taxon>Bacteria</taxon>
        <taxon>Pseudomonadati</taxon>
        <taxon>Pseudomonadota</taxon>
        <taxon>Gammaproteobacteria</taxon>
        <taxon>Enterobacterales</taxon>
        <taxon>Enterobacteriaceae</taxon>
        <taxon>Escherichia</taxon>
    </lineage>
</organism>
<comment type="function">
    <text evidence="1">Required for anaerobic carnitine reduction. May bring reductant to CaiA.</text>
</comment>
<comment type="pathway">
    <text evidence="1">Amine and polyamine metabolism; carnitine metabolism.</text>
</comment>
<comment type="subunit">
    <text evidence="1">Heterodimer of FixA and FixB.</text>
</comment>
<comment type="similarity">
    <text evidence="1">Belongs to the ETF beta-subunit/FixA family.</text>
</comment>
<gene>
    <name evidence="1" type="primary">fixA</name>
    <name type="ordered locus">EcE24377A_0045</name>
</gene>
<dbReference type="EMBL" id="CP000800">
    <property type="protein sequence ID" value="ABV20271.1"/>
    <property type="molecule type" value="Genomic_DNA"/>
</dbReference>
<dbReference type="RefSeq" id="WP_000692204.1">
    <property type="nucleotide sequence ID" value="NC_009801.1"/>
</dbReference>
<dbReference type="SMR" id="A7ZHD4"/>
<dbReference type="KEGG" id="ecw:EcE24377A_0045"/>
<dbReference type="HOGENOM" id="CLU_060196_2_2_6"/>
<dbReference type="UniPathway" id="UPA00117"/>
<dbReference type="Proteomes" id="UP000001122">
    <property type="component" value="Chromosome"/>
</dbReference>
<dbReference type="GO" id="GO:0009055">
    <property type="term" value="F:electron transfer activity"/>
    <property type="evidence" value="ECO:0007669"/>
    <property type="project" value="InterPro"/>
</dbReference>
<dbReference type="GO" id="GO:0009437">
    <property type="term" value="P:carnitine metabolic process"/>
    <property type="evidence" value="ECO:0007669"/>
    <property type="project" value="UniProtKB-UniRule"/>
</dbReference>
<dbReference type="CDD" id="cd01714">
    <property type="entry name" value="ETF_beta"/>
    <property type="match status" value="1"/>
</dbReference>
<dbReference type="FunFam" id="3.40.50.620:FF:000072">
    <property type="entry name" value="Protein FixA homolog"/>
    <property type="match status" value="1"/>
</dbReference>
<dbReference type="Gene3D" id="3.40.50.620">
    <property type="entry name" value="HUPs"/>
    <property type="match status" value="1"/>
</dbReference>
<dbReference type="HAMAP" id="MF_01055">
    <property type="entry name" value="FixA"/>
    <property type="match status" value="1"/>
</dbReference>
<dbReference type="InterPro" id="IPR000049">
    <property type="entry name" value="ET-Flavoprotein_bsu_CS"/>
</dbReference>
<dbReference type="InterPro" id="IPR014730">
    <property type="entry name" value="ETF_a/b_N"/>
</dbReference>
<dbReference type="InterPro" id="IPR012255">
    <property type="entry name" value="ETF_b"/>
</dbReference>
<dbReference type="InterPro" id="IPR033948">
    <property type="entry name" value="ETF_beta_N"/>
</dbReference>
<dbReference type="InterPro" id="IPR023463">
    <property type="entry name" value="FixA"/>
</dbReference>
<dbReference type="InterPro" id="IPR014729">
    <property type="entry name" value="Rossmann-like_a/b/a_fold"/>
</dbReference>
<dbReference type="NCBIfam" id="NF002888">
    <property type="entry name" value="PRK03359.1"/>
    <property type="match status" value="1"/>
</dbReference>
<dbReference type="PANTHER" id="PTHR21294">
    <property type="entry name" value="ELECTRON TRANSFER FLAVOPROTEIN BETA-SUBUNIT"/>
    <property type="match status" value="1"/>
</dbReference>
<dbReference type="PANTHER" id="PTHR21294:SF17">
    <property type="entry name" value="PROTEIN FIXA"/>
    <property type="match status" value="1"/>
</dbReference>
<dbReference type="Pfam" id="PF01012">
    <property type="entry name" value="ETF"/>
    <property type="match status" value="1"/>
</dbReference>
<dbReference type="PIRSF" id="PIRSF000090">
    <property type="entry name" value="Beta-ETF"/>
    <property type="match status" value="1"/>
</dbReference>
<dbReference type="SMART" id="SM00893">
    <property type="entry name" value="ETF"/>
    <property type="match status" value="1"/>
</dbReference>
<dbReference type="SUPFAM" id="SSF52402">
    <property type="entry name" value="Adenine nucleotide alpha hydrolases-like"/>
    <property type="match status" value="1"/>
</dbReference>
<dbReference type="PROSITE" id="PS01065">
    <property type="entry name" value="ETF_BETA"/>
    <property type="match status" value="1"/>
</dbReference>
<sequence length="256" mass="27144">MKIITCYKCVPDEQDIAVNNADGSLDFSKADAKISQYDLNAIEAACQLKQQAAEAQVTALSVGGKALTNAKGRKDVLSRGPDELIVVIDDQFEQALPQQTASALAAAAQKAGFDLILCGDGSSDLYAQQVGLLVGEILNIPAVNGVSKIISLTADTLTVERELEDETETLSIPLPAVVAVSTDINSPQIPSMKAILGAAKKPVQVWSAADIGFNAEAAWSEQQVAAPKQRERQRIVIEGDGEEQIAAFAENLRKVI</sequence>
<protein>
    <recommendedName>
        <fullName evidence="1">Protein FixA</fullName>
    </recommendedName>
</protein>
<feature type="chain" id="PRO_1000064380" description="Protein FixA">
    <location>
        <begin position="1"/>
        <end position="256"/>
    </location>
</feature>
<keyword id="KW-0249">Electron transport</keyword>
<keyword id="KW-1185">Reference proteome</keyword>
<keyword id="KW-0813">Transport</keyword>
<name>FIXA_ECO24</name>